<evidence type="ECO:0000255" key="1">
    <source>
        <dbReference type="HAMAP-Rule" id="MF_00332"/>
    </source>
</evidence>
<evidence type="ECO:0000256" key="2">
    <source>
        <dbReference type="SAM" id="MobiDB-lite"/>
    </source>
</evidence>
<gene>
    <name evidence="1" type="primary">dnaK</name>
    <name type="ordered locus">Shew_2844</name>
</gene>
<organism>
    <name type="scientific">Shewanella loihica (strain ATCC BAA-1088 / PV-4)</name>
    <dbReference type="NCBI Taxonomy" id="323850"/>
    <lineage>
        <taxon>Bacteria</taxon>
        <taxon>Pseudomonadati</taxon>
        <taxon>Pseudomonadota</taxon>
        <taxon>Gammaproteobacteria</taxon>
        <taxon>Alteromonadales</taxon>
        <taxon>Shewanellaceae</taxon>
        <taxon>Shewanella</taxon>
    </lineage>
</organism>
<reference key="1">
    <citation type="submission" date="2007-03" db="EMBL/GenBank/DDBJ databases">
        <title>Complete sequence of Shewanella loihica PV-4.</title>
        <authorList>
            <consortium name="US DOE Joint Genome Institute"/>
            <person name="Copeland A."/>
            <person name="Lucas S."/>
            <person name="Lapidus A."/>
            <person name="Barry K."/>
            <person name="Detter J.C."/>
            <person name="Glavina del Rio T."/>
            <person name="Hammon N."/>
            <person name="Israni S."/>
            <person name="Dalin E."/>
            <person name="Tice H."/>
            <person name="Pitluck S."/>
            <person name="Chain P."/>
            <person name="Malfatti S."/>
            <person name="Shin M."/>
            <person name="Vergez L."/>
            <person name="Schmutz J."/>
            <person name="Larimer F."/>
            <person name="Land M."/>
            <person name="Hauser L."/>
            <person name="Kyrpides N."/>
            <person name="Mikhailova N."/>
            <person name="Romine M.F."/>
            <person name="Serres G."/>
            <person name="Fredrickson J."/>
            <person name="Tiedje J."/>
            <person name="Richardson P."/>
        </authorList>
    </citation>
    <scope>NUCLEOTIDE SEQUENCE [LARGE SCALE GENOMIC DNA]</scope>
    <source>
        <strain>ATCC BAA-1088 / PV-4</strain>
    </source>
</reference>
<keyword id="KW-0067">ATP-binding</keyword>
<keyword id="KW-0143">Chaperone</keyword>
<keyword id="KW-0547">Nucleotide-binding</keyword>
<keyword id="KW-0597">Phosphoprotein</keyword>
<keyword id="KW-1185">Reference proteome</keyword>
<keyword id="KW-0346">Stress response</keyword>
<proteinExistence type="inferred from homology"/>
<sequence length="637" mass="68636">MGKIIGIDLGTTNSCVAVLDGDKARVIENAEGDRTTPSIIAYTGEEVLVGQPAKRQAVTNPKNTFFAIKRLIGRRFKDDEVQRDVDIMPFKIIAADNGDAWVEAHDKKMAPPQVSAEILKKMKKTAEDYLGEPVTEAVITVPAYFNDSQRQATKDAGRIAGLEVKRIINEPTAAALAYGIDKKQGDNIVAVYDLGGGTFDISIIEIDSVDGEQTFEVLATNGDTHLGGEDFDNRLINYLADEFKKEQSLDLRNDPLAMQRLKEAAEKAKIELSSTTQTEVNLPYITADATGPKHLVVKITRAKLESLVEDLIQRSLEPLKVALADADLSVSDINEVILVGGQTRMPKVRAEVSAFFGKELRQDVNPDEAVAIGAAVQAGVLAGDVKDVLLLDVTPLSLGIETMGSVMTKLIEKNTTIPTKASQTFSTADDNQSAVTIHVLQGERKQSSANKSLGQFNLEGIEPAPRGMPQIEVAFDIDADGILHVSATDKKTGKAQNITIKASSGLSDEEVEAMVRDAEAHADEDAKFEELVSARNQADGMVHATKKQIEEAGDALPSEDKEKIEAAMADVDTATKGNDKEAIEKATQALMEASAKLMEIAQAKAQAGQGEQAQQSNEAPADDVVDAEFEEVKDDKK</sequence>
<comment type="function">
    <text evidence="1">Acts as a chaperone.</text>
</comment>
<comment type="induction">
    <text evidence="1">By stress conditions e.g. heat shock.</text>
</comment>
<comment type="similarity">
    <text evidence="1">Belongs to the heat shock protein 70 family.</text>
</comment>
<dbReference type="EMBL" id="CP000606">
    <property type="protein sequence ID" value="ABO24710.1"/>
    <property type="molecule type" value="Genomic_DNA"/>
</dbReference>
<dbReference type="RefSeq" id="WP_011866641.1">
    <property type="nucleotide sequence ID" value="NC_009092.1"/>
</dbReference>
<dbReference type="SMR" id="A3QGW2"/>
<dbReference type="STRING" id="323850.Shew_2844"/>
<dbReference type="KEGG" id="slo:Shew_2844"/>
<dbReference type="eggNOG" id="COG0443">
    <property type="taxonomic scope" value="Bacteria"/>
</dbReference>
<dbReference type="HOGENOM" id="CLU_005965_2_1_6"/>
<dbReference type="OrthoDB" id="9766019at2"/>
<dbReference type="Proteomes" id="UP000001558">
    <property type="component" value="Chromosome"/>
</dbReference>
<dbReference type="GO" id="GO:0005524">
    <property type="term" value="F:ATP binding"/>
    <property type="evidence" value="ECO:0007669"/>
    <property type="project" value="UniProtKB-UniRule"/>
</dbReference>
<dbReference type="GO" id="GO:0140662">
    <property type="term" value="F:ATP-dependent protein folding chaperone"/>
    <property type="evidence" value="ECO:0007669"/>
    <property type="project" value="InterPro"/>
</dbReference>
<dbReference type="GO" id="GO:0051082">
    <property type="term" value="F:unfolded protein binding"/>
    <property type="evidence" value="ECO:0007669"/>
    <property type="project" value="InterPro"/>
</dbReference>
<dbReference type="CDD" id="cd10234">
    <property type="entry name" value="ASKHA_NBD_HSP70_DnaK-like"/>
    <property type="match status" value="1"/>
</dbReference>
<dbReference type="FunFam" id="2.60.34.10:FF:000014">
    <property type="entry name" value="Chaperone protein DnaK HSP70"/>
    <property type="match status" value="1"/>
</dbReference>
<dbReference type="FunFam" id="1.20.1270.10:FF:000001">
    <property type="entry name" value="Molecular chaperone DnaK"/>
    <property type="match status" value="1"/>
</dbReference>
<dbReference type="FunFam" id="3.30.420.40:FF:000004">
    <property type="entry name" value="Molecular chaperone DnaK"/>
    <property type="match status" value="1"/>
</dbReference>
<dbReference type="FunFam" id="3.90.640.10:FF:000003">
    <property type="entry name" value="Molecular chaperone DnaK"/>
    <property type="match status" value="1"/>
</dbReference>
<dbReference type="Gene3D" id="1.20.1270.10">
    <property type="match status" value="1"/>
</dbReference>
<dbReference type="Gene3D" id="3.30.420.40">
    <property type="match status" value="2"/>
</dbReference>
<dbReference type="Gene3D" id="3.90.640.10">
    <property type="entry name" value="Actin, Chain A, domain 4"/>
    <property type="match status" value="1"/>
</dbReference>
<dbReference type="Gene3D" id="2.60.34.10">
    <property type="entry name" value="Substrate Binding Domain Of DNAk, Chain A, domain 1"/>
    <property type="match status" value="1"/>
</dbReference>
<dbReference type="HAMAP" id="MF_00332">
    <property type="entry name" value="DnaK"/>
    <property type="match status" value="1"/>
</dbReference>
<dbReference type="InterPro" id="IPR043129">
    <property type="entry name" value="ATPase_NBD"/>
</dbReference>
<dbReference type="InterPro" id="IPR012725">
    <property type="entry name" value="Chaperone_DnaK"/>
</dbReference>
<dbReference type="InterPro" id="IPR018181">
    <property type="entry name" value="Heat_shock_70_CS"/>
</dbReference>
<dbReference type="InterPro" id="IPR029048">
    <property type="entry name" value="HSP70_C_sf"/>
</dbReference>
<dbReference type="InterPro" id="IPR029047">
    <property type="entry name" value="HSP70_peptide-bd_sf"/>
</dbReference>
<dbReference type="InterPro" id="IPR013126">
    <property type="entry name" value="Hsp_70_fam"/>
</dbReference>
<dbReference type="NCBIfam" id="NF001413">
    <property type="entry name" value="PRK00290.1"/>
    <property type="match status" value="1"/>
</dbReference>
<dbReference type="NCBIfam" id="TIGR02350">
    <property type="entry name" value="prok_dnaK"/>
    <property type="match status" value="1"/>
</dbReference>
<dbReference type="PANTHER" id="PTHR19375">
    <property type="entry name" value="HEAT SHOCK PROTEIN 70KDA"/>
    <property type="match status" value="1"/>
</dbReference>
<dbReference type="Pfam" id="PF00012">
    <property type="entry name" value="HSP70"/>
    <property type="match status" value="1"/>
</dbReference>
<dbReference type="PRINTS" id="PR00301">
    <property type="entry name" value="HEATSHOCK70"/>
</dbReference>
<dbReference type="SUPFAM" id="SSF53067">
    <property type="entry name" value="Actin-like ATPase domain"/>
    <property type="match status" value="2"/>
</dbReference>
<dbReference type="SUPFAM" id="SSF100920">
    <property type="entry name" value="Heat shock protein 70kD (HSP70), peptide-binding domain"/>
    <property type="match status" value="1"/>
</dbReference>
<dbReference type="PROSITE" id="PS00297">
    <property type="entry name" value="HSP70_1"/>
    <property type="match status" value="1"/>
</dbReference>
<dbReference type="PROSITE" id="PS00329">
    <property type="entry name" value="HSP70_2"/>
    <property type="match status" value="1"/>
</dbReference>
<dbReference type="PROSITE" id="PS01036">
    <property type="entry name" value="HSP70_3"/>
    <property type="match status" value="1"/>
</dbReference>
<name>DNAK_SHELP</name>
<feature type="chain" id="PRO_1000059663" description="Chaperone protein DnaK">
    <location>
        <begin position="1"/>
        <end position="637"/>
    </location>
</feature>
<feature type="region of interest" description="Disordered" evidence="2">
    <location>
        <begin position="602"/>
        <end position="637"/>
    </location>
</feature>
<feature type="compositionally biased region" description="Low complexity" evidence="2">
    <location>
        <begin position="602"/>
        <end position="619"/>
    </location>
</feature>
<feature type="compositionally biased region" description="Acidic residues" evidence="2">
    <location>
        <begin position="620"/>
        <end position="637"/>
    </location>
</feature>
<feature type="modified residue" description="Phosphothreonine; by autocatalysis" evidence="1">
    <location>
        <position position="198"/>
    </location>
</feature>
<protein>
    <recommendedName>
        <fullName evidence="1">Chaperone protein DnaK</fullName>
    </recommendedName>
    <alternativeName>
        <fullName evidence="1">HSP70</fullName>
    </alternativeName>
    <alternativeName>
        <fullName evidence="1">Heat shock 70 kDa protein</fullName>
    </alternativeName>
    <alternativeName>
        <fullName evidence="1">Heat shock protein 70</fullName>
    </alternativeName>
</protein>
<accession>A3QGW2</accession>